<organism>
    <name type="scientific">Staphylococcus epidermidis (strain ATCC 12228 / FDA PCI 1200)</name>
    <dbReference type="NCBI Taxonomy" id="176280"/>
    <lineage>
        <taxon>Bacteria</taxon>
        <taxon>Bacillati</taxon>
        <taxon>Bacillota</taxon>
        <taxon>Bacilli</taxon>
        <taxon>Bacillales</taxon>
        <taxon>Staphylococcaceae</taxon>
        <taxon>Staphylococcus</taxon>
    </lineage>
</organism>
<comment type="function">
    <text evidence="1">Positive regulator of sigma-B activity. Non-phosphorylated RsbV binds to RsbW, preventing its association with sigma-B. When phosphorylated, releases RsbW, which is then free to complex with and inactivate sigma-B (By similarity).</text>
</comment>
<comment type="PTM">
    <text evidence="1">Phosphorylated by RsbW on a serine residue.</text>
</comment>
<comment type="similarity">
    <text evidence="3">Belongs to the anti-sigma-factor antagonist family.</text>
</comment>
<dbReference type="EMBL" id="AE015929">
    <property type="protein sequence ID" value="AAO05269.1"/>
    <property type="molecule type" value="Genomic_DNA"/>
</dbReference>
<dbReference type="RefSeq" id="NP_765225.1">
    <property type="nucleotide sequence ID" value="NC_004461.1"/>
</dbReference>
<dbReference type="RefSeq" id="WP_001829952.1">
    <property type="nucleotide sequence ID" value="NZ_WBME01000071.1"/>
</dbReference>
<dbReference type="SMR" id="P0C0Q8"/>
<dbReference type="KEGG" id="sep:SE_1670"/>
<dbReference type="PATRIC" id="fig|176280.10.peg.1631"/>
<dbReference type="eggNOG" id="COG1366">
    <property type="taxonomic scope" value="Bacteria"/>
</dbReference>
<dbReference type="HOGENOM" id="CLU_115403_9_3_9"/>
<dbReference type="OrthoDB" id="9793697at2"/>
<dbReference type="Proteomes" id="UP000001411">
    <property type="component" value="Chromosome"/>
</dbReference>
<dbReference type="GO" id="GO:0043856">
    <property type="term" value="F:anti-sigma factor antagonist activity"/>
    <property type="evidence" value="ECO:0007669"/>
    <property type="project" value="InterPro"/>
</dbReference>
<dbReference type="CDD" id="cd07043">
    <property type="entry name" value="STAS_anti-anti-sigma_factors"/>
    <property type="match status" value="1"/>
</dbReference>
<dbReference type="FunFam" id="3.30.750.24:FF:000001">
    <property type="entry name" value="Anti-sigma factor antagonist"/>
    <property type="match status" value="1"/>
</dbReference>
<dbReference type="Gene3D" id="3.30.750.24">
    <property type="entry name" value="STAS domain"/>
    <property type="match status" value="1"/>
</dbReference>
<dbReference type="InterPro" id="IPR003658">
    <property type="entry name" value="Anti-sigma_ant"/>
</dbReference>
<dbReference type="InterPro" id="IPR002645">
    <property type="entry name" value="STAS_dom"/>
</dbReference>
<dbReference type="InterPro" id="IPR036513">
    <property type="entry name" value="STAS_dom_sf"/>
</dbReference>
<dbReference type="NCBIfam" id="TIGR00377">
    <property type="entry name" value="ant_ant_sig"/>
    <property type="match status" value="1"/>
</dbReference>
<dbReference type="PANTHER" id="PTHR33495">
    <property type="entry name" value="ANTI-SIGMA FACTOR ANTAGONIST TM_1081-RELATED-RELATED"/>
    <property type="match status" value="1"/>
</dbReference>
<dbReference type="PANTHER" id="PTHR33495:SF9">
    <property type="entry name" value="ANTI-SIGMA-B FACTOR ANTAGONIST"/>
    <property type="match status" value="1"/>
</dbReference>
<dbReference type="Pfam" id="PF01740">
    <property type="entry name" value="STAS"/>
    <property type="match status" value="1"/>
</dbReference>
<dbReference type="SUPFAM" id="SSF52091">
    <property type="entry name" value="SpoIIaa-like"/>
    <property type="match status" value="1"/>
</dbReference>
<dbReference type="PROSITE" id="PS50801">
    <property type="entry name" value="STAS"/>
    <property type="match status" value="1"/>
</dbReference>
<sequence>MNLNIETITHDDFYEVKVGGELDVYTVPELEEVLVPMRQEGTHDVHVNLANVSYMDSTGLGLFVGTLKALNQNDKNLYILGVSERIGRLFDITGLKDLMHVNEGTEVE</sequence>
<accession>P0C0Q8</accession>
<accession>Q8VSV6</accession>
<evidence type="ECO:0000250" key="1"/>
<evidence type="ECO:0000255" key="2">
    <source>
        <dbReference type="PROSITE-ProRule" id="PRU00198"/>
    </source>
</evidence>
<evidence type="ECO:0000305" key="3"/>
<keyword id="KW-0597">Phosphoprotein</keyword>
<gene>
    <name type="primary">rsbV</name>
    <name type="ordered locus">SE_1670</name>
</gene>
<protein>
    <recommendedName>
        <fullName>Anti-sigma-B factor antagonist</fullName>
    </recommendedName>
    <alternativeName>
        <fullName>Anti-anti-sigma-B factor</fullName>
    </alternativeName>
</protein>
<feature type="chain" id="PRO_0000194196" description="Anti-sigma-B factor antagonist">
    <location>
        <begin position="1"/>
        <end position="108"/>
    </location>
</feature>
<feature type="domain" description="STAS" evidence="2">
    <location>
        <begin position="3"/>
        <end position="108"/>
    </location>
</feature>
<feature type="modified residue" description="Phosphoserine" evidence="1">
    <location>
        <position position="57"/>
    </location>
</feature>
<reference key="1">
    <citation type="journal article" date="2003" name="Mol. Microbiol.">
        <title>Genome-based analysis of virulence genes in a non-biofilm-forming Staphylococcus epidermidis strain (ATCC 12228).</title>
        <authorList>
            <person name="Zhang Y.-Q."/>
            <person name="Ren S.-X."/>
            <person name="Li H.-L."/>
            <person name="Wang Y.-X."/>
            <person name="Fu G."/>
            <person name="Yang J."/>
            <person name="Qin Z.-Q."/>
            <person name="Miao Y.-G."/>
            <person name="Wang W.-Y."/>
            <person name="Chen R.-S."/>
            <person name="Shen Y."/>
            <person name="Chen Z."/>
            <person name="Yuan Z.-H."/>
            <person name="Zhao G.-P."/>
            <person name="Qu D."/>
            <person name="Danchin A."/>
            <person name="Wen Y.-M."/>
        </authorList>
    </citation>
    <scope>NUCLEOTIDE SEQUENCE [LARGE SCALE GENOMIC DNA]</scope>
    <source>
        <strain>ATCC 12228 / FDA PCI 1200</strain>
    </source>
</reference>
<name>RSBV_STAES</name>
<proteinExistence type="inferred from homology"/>